<feature type="signal peptide" evidence="1">
    <location>
        <begin position="1"/>
        <end position="19"/>
    </location>
</feature>
<feature type="chain" id="PRO_0000203068" description="Outer spore wall protein 4">
    <location>
        <begin position="20"/>
        <end position="219"/>
    </location>
</feature>
<feature type="topological domain" description="Extracellular" evidence="12">
    <location>
        <begin position="20"/>
        <end position="170"/>
    </location>
</feature>
<feature type="transmembrane region" description="Helical" evidence="1">
    <location>
        <begin position="171"/>
        <end position="191"/>
    </location>
</feature>
<feature type="topological domain" description="Cytoplasmic" evidence="12">
    <location>
        <begin position="192"/>
        <end position="193"/>
    </location>
</feature>
<feature type="transmembrane region" description="Helical" evidence="1">
    <location>
        <begin position="194"/>
        <end position="214"/>
    </location>
</feature>
<feature type="topological domain" description="Extracellular" evidence="4">
    <location>
        <begin position="215"/>
        <end position="219"/>
    </location>
</feature>
<feature type="glycosylation site" description="N-linked (GlcNAc...) asparagine" evidence="2">
    <location>
        <position position="42"/>
    </location>
</feature>
<feature type="glycosylation site" description="N-linked (GlcNAc...) asparagine" evidence="2">
    <location>
        <position position="62"/>
    </location>
</feature>
<feature type="glycosylation site" description="N-linked (GlcNAc...) asparagine" evidence="2">
    <location>
        <position position="136"/>
    </location>
</feature>
<keyword id="KW-0325">Glycoprotein</keyword>
<keyword id="KW-0472">Membrane</keyword>
<keyword id="KW-1185">Reference proteome</keyword>
<keyword id="KW-0732">Signal</keyword>
<keyword id="KW-0749">Sporulation</keyword>
<keyword id="KW-0812">Transmembrane</keyword>
<keyword id="KW-1133">Transmembrane helix</keyword>
<sequence>MRFQLFIYFYFTIVVIAGTNTIQQFSDAGDRLITSLRNLDNNGTYETLTAEKVPIIEGQIQNISAKYEQHTFILKGLEAVLNYKVKSLDNNERESLEIEYEKVEKALDAALNVSPFEYIKKFKEVSRGKVVNALENLSREQNRITINGGREDEKEKEAREKKKRLDRIKRILTVSLLELGLAQGVADLCAVAPFACLLGVTVGSIGFIFWLALIYNAIQ</sequence>
<organism>
    <name type="scientific">Saccharomyces cerevisiae (strain ATCC 204508 / S288c)</name>
    <name type="common">Baker's yeast</name>
    <dbReference type="NCBI Taxonomy" id="559292"/>
    <lineage>
        <taxon>Eukaryota</taxon>
        <taxon>Fungi</taxon>
        <taxon>Dikarya</taxon>
        <taxon>Ascomycota</taxon>
        <taxon>Saccharomycotina</taxon>
        <taxon>Saccharomycetes</taxon>
        <taxon>Saccharomycetales</taxon>
        <taxon>Saccharomycetaceae</taxon>
        <taxon>Saccharomyces</taxon>
    </lineage>
</organism>
<protein>
    <recommendedName>
        <fullName evidence="10">Outer spore wall protein 4</fullName>
    </recommendedName>
    <alternativeName>
        <fullName evidence="9">Loss of heterozygosity protein 1</fullName>
    </alternativeName>
</protein>
<reference key="1">
    <citation type="journal article" date="1996" name="EMBO J.">
        <title>Complete nucleotide sequence of Saccharomyces cerevisiae chromosome X.</title>
        <authorList>
            <person name="Galibert F."/>
            <person name="Alexandraki D."/>
            <person name="Baur A."/>
            <person name="Boles E."/>
            <person name="Chalwatzis N."/>
            <person name="Chuat J.-C."/>
            <person name="Coster F."/>
            <person name="Cziepluch C."/>
            <person name="de Haan M."/>
            <person name="Domdey H."/>
            <person name="Durand P."/>
            <person name="Entian K.-D."/>
            <person name="Gatius M."/>
            <person name="Goffeau A."/>
            <person name="Grivell L.A."/>
            <person name="Hennemann A."/>
            <person name="Herbert C.J."/>
            <person name="Heumann K."/>
            <person name="Hilger F."/>
            <person name="Hollenberg C.P."/>
            <person name="Huang M.-E."/>
            <person name="Jacq C."/>
            <person name="Jauniaux J.-C."/>
            <person name="Katsoulou C."/>
            <person name="Kirchrath L."/>
            <person name="Kleine K."/>
            <person name="Kordes E."/>
            <person name="Koetter P."/>
            <person name="Liebl S."/>
            <person name="Louis E.J."/>
            <person name="Manus V."/>
            <person name="Mewes H.-W."/>
            <person name="Miosga T."/>
            <person name="Obermaier B."/>
            <person name="Perea J."/>
            <person name="Pohl T.M."/>
            <person name="Portetelle D."/>
            <person name="Pujol A."/>
            <person name="Purnelle B."/>
            <person name="Ramezani Rad M."/>
            <person name="Rasmussen S.W."/>
            <person name="Rose M."/>
            <person name="Rossau R."/>
            <person name="Schaaff-Gerstenschlaeger I."/>
            <person name="Smits P.H.M."/>
            <person name="Scarcez T."/>
            <person name="Soriano N."/>
            <person name="To Van D."/>
            <person name="Tzermia M."/>
            <person name="Van Broekhoven A."/>
            <person name="Vandenbol M."/>
            <person name="Wedler H."/>
            <person name="von Wettstein D."/>
            <person name="Wambutt R."/>
            <person name="Zagulski M."/>
            <person name="Zollner A."/>
            <person name="Karpfinger-Hartl L."/>
        </authorList>
    </citation>
    <scope>NUCLEOTIDE SEQUENCE [LARGE SCALE GENOMIC DNA]</scope>
    <source>
        <strain>ATCC 204508 / S288c</strain>
    </source>
</reference>
<reference key="2">
    <citation type="journal article" date="2014" name="G3 (Bethesda)">
        <title>The reference genome sequence of Saccharomyces cerevisiae: Then and now.</title>
        <authorList>
            <person name="Engel S.R."/>
            <person name="Dietrich F.S."/>
            <person name="Fisk D.G."/>
            <person name="Binkley G."/>
            <person name="Balakrishnan R."/>
            <person name="Costanzo M.C."/>
            <person name="Dwight S.S."/>
            <person name="Hitz B.C."/>
            <person name="Karra K."/>
            <person name="Nash R.S."/>
            <person name="Weng S."/>
            <person name="Wong E.D."/>
            <person name="Lloyd P."/>
            <person name="Skrzypek M.S."/>
            <person name="Miyasato S.R."/>
            <person name="Simison M."/>
            <person name="Cherry J.M."/>
        </authorList>
    </citation>
    <scope>GENOME REANNOTATION</scope>
    <source>
        <strain>ATCC 204508 / S288c</strain>
    </source>
</reference>
<reference key="3">
    <citation type="journal article" date="2007" name="Genome Res.">
        <title>Approaching a complete repository of sequence-verified protein-encoding clones for Saccharomyces cerevisiae.</title>
        <authorList>
            <person name="Hu Y."/>
            <person name="Rolfs A."/>
            <person name="Bhullar B."/>
            <person name="Murthy T.V.S."/>
            <person name="Zhu C."/>
            <person name="Berger M.F."/>
            <person name="Camargo A.A."/>
            <person name="Kelley F."/>
            <person name="McCarron S."/>
            <person name="Jepson D."/>
            <person name="Richardson A."/>
            <person name="Raphael J."/>
            <person name="Moreira D."/>
            <person name="Taycher E."/>
            <person name="Zuo D."/>
            <person name="Mohr S."/>
            <person name="Kane M.F."/>
            <person name="Williamson J."/>
            <person name="Simpson A.J.G."/>
            <person name="Bulyk M.L."/>
            <person name="Harlow E."/>
            <person name="Marsischky G."/>
            <person name="Kolodner R.D."/>
            <person name="LaBaer J."/>
        </authorList>
    </citation>
    <scope>NUCLEOTIDE SEQUENCE [GENOMIC DNA]</scope>
    <source>
        <strain>ATCC 204508 / S288c</strain>
    </source>
</reference>
<reference key="4">
    <citation type="journal article" date="1998" name="Science">
        <title>The transcriptional program of sporulation in budding yeast.</title>
        <authorList>
            <person name="Chu S."/>
            <person name="DeRisi J."/>
            <person name="Eisen M."/>
            <person name="Mulholland J."/>
            <person name="Botstein D."/>
            <person name="Brown P.O."/>
            <person name="Herskowitz I."/>
        </authorList>
    </citation>
    <scope>INDUCTION</scope>
</reference>
<reference key="5">
    <citation type="journal article" date="2003" name="Mol. Cell. Biol.">
        <title>Rfm1, a novel tethering factor required to recruit the hst1 histone deacetylase for repression of middle sporulation genes.</title>
        <authorList>
            <person name="McCord R."/>
            <person name="Pierce M."/>
            <person name="Xie J."/>
            <person name="Wonkatal S."/>
            <person name="Mickel C."/>
            <person name="Vershon A.K."/>
        </authorList>
    </citation>
    <scope>INDUCTION</scope>
</reference>
<reference key="6">
    <citation type="journal article" date="2006" name="Proc. Natl. Acad. Sci. U.S.A.">
        <title>A global topology map of the Saccharomyces cerevisiae membrane proteome.</title>
        <authorList>
            <person name="Kim H."/>
            <person name="Melen K."/>
            <person name="Oesterberg M."/>
            <person name="von Heijne G."/>
        </authorList>
    </citation>
    <scope>TOPOLOGY [LARGE SCALE ANALYSIS]</scope>
    <source>
        <strain>ATCC 208353 / W303-1A</strain>
    </source>
</reference>
<reference key="7">
    <citation type="journal article" date="2008" name="Genetics">
        <title>A genetic screen for increased loss of heterozygosity in Saccharomyces cerevisiae.</title>
        <authorList>
            <person name="Andersen M.P."/>
            <person name="Nelson Z.W."/>
            <person name="Hetrick E.D."/>
            <person name="Gottschling D.E."/>
        </authorList>
    </citation>
    <scope>GENE NAME</scope>
    <scope>FUNCTION</scope>
    <scope>DISRUPTION PHENOTYPE</scope>
</reference>
<reference key="8">
    <citation type="journal article" date="2009" name="Mol. Syst. Biol.">
        <title>Global analysis of the glycoproteome in Saccharomyces cerevisiae reveals new roles for protein glycosylation in eukaryotes.</title>
        <authorList>
            <person name="Kung L.A."/>
            <person name="Tao S.-C."/>
            <person name="Qian J."/>
            <person name="Smith M.G."/>
            <person name="Snyder M."/>
            <person name="Zhu H."/>
        </authorList>
    </citation>
    <scope>GLYCOSYLATION [LARGE SCALE ANALYSIS]</scope>
</reference>
<reference key="9">
    <citation type="journal article" date="2009" name="PLoS ONE">
        <title>A screen for spore wall permeability mutants identifies a secreted protease required for proper spore wall assembly.</title>
        <authorList>
            <person name="Suda Y."/>
            <person name="Rodriguez R.K."/>
            <person name="Coluccio A.E."/>
            <person name="Neiman A.M."/>
        </authorList>
    </citation>
    <scope>FUNCTION</scope>
</reference>
<reference key="10">
    <citation type="journal article" date="2013" name="PLoS Genet.">
        <title>A highly redundant gene network controls assembly of the outer spore wall in S. cerevisiae.</title>
        <authorList>
            <person name="Lin C.P."/>
            <person name="Kim C."/>
            <person name="Smith S.O."/>
            <person name="Neiman A.M."/>
        </authorList>
    </citation>
    <scope>FUNCTION</scope>
    <scope>DISRUPTION PHENOTYPE</scope>
</reference>
<evidence type="ECO:0000255" key="1"/>
<evidence type="ECO:0000255" key="2">
    <source>
        <dbReference type="PROSITE-ProRule" id="PRU00498"/>
    </source>
</evidence>
<evidence type="ECO:0000269" key="3">
    <source>
    </source>
</evidence>
<evidence type="ECO:0000269" key="4">
    <source>
    </source>
</evidence>
<evidence type="ECO:0000269" key="5">
    <source>
    </source>
</evidence>
<evidence type="ECO:0000269" key="6">
    <source>
    </source>
</evidence>
<evidence type="ECO:0000269" key="7">
    <source>
    </source>
</evidence>
<evidence type="ECO:0000269" key="8">
    <source>
    </source>
</evidence>
<evidence type="ECO:0000303" key="9">
    <source>
    </source>
</evidence>
<evidence type="ECO:0000303" key="10">
    <source>
    </source>
</evidence>
<evidence type="ECO:0000305" key="11"/>
<evidence type="ECO:0000305" key="12">
    <source>
    </source>
</evidence>
<evidence type="ECO:0000312" key="13">
    <source>
        <dbReference type="SGD" id="S000003575"/>
    </source>
</evidence>
<dbReference type="EMBL" id="Z49313">
    <property type="protein sequence ID" value="CAA89329.1"/>
    <property type="molecule type" value="Genomic_DNA"/>
</dbReference>
<dbReference type="EMBL" id="AY558245">
    <property type="protein sequence ID" value="AAS56571.1"/>
    <property type="molecule type" value="Genomic_DNA"/>
</dbReference>
<dbReference type="EMBL" id="BK006943">
    <property type="protein sequence ID" value="DAA08761.1"/>
    <property type="molecule type" value="Genomic_DNA"/>
</dbReference>
<dbReference type="PIR" id="S56810">
    <property type="entry name" value="S56810"/>
</dbReference>
<dbReference type="RefSeq" id="NP_012496.1">
    <property type="nucleotide sequence ID" value="NM_001181472.1"/>
</dbReference>
<dbReference type="SMR" id="P47055"/>
<dbReference type="BioGRID" id="33721">
    <property type="interactions" value="16"/>
</dbReference>
<dbReference type="FunCoup" id="P47055">
    <property type="interactions" value="44"/>
</dbReference>
<dbReference type="STRING" id="4932.YJL038C"/>
<dbReference type="GlyCosmos" id="P47055">
    <property type="glycosylation" value="3 sites, No reported glycans"/>
</dbReference>
<dbReference type="GlyGen" id="P47055">
    <property type="glycosylation" value="3 sites"/>
</dbReference>
<dbReference type="PaxDb" id="4932-YJL038C"/>
<dbReference type="PeptideAtlas" id="P47055"/>
<dbReference type="EnsemblFungi" id="YJL038C_mRNA">
    <property type="protein sequence ID" value="YJL038C"/>
    <property type="gene ID" value="YJL038C"/>
</dbReference>
<dbReference type="GeneID" id="853413"/>
<dbReference type="KEGG" id="sce:YJL038C"/>
<dbReference type="AGR" id="SGD:S000003575"/>
<dbReference type="SGD" id="S000003575">
    <property type="gene designation" value="LOH1"/>
</dbReference>
<dbReference type="VEuPathDB" id="FungiDB:YJL038C"/>
<dbReference type="GeneTree" id="ENSGT00940000182578"/>
<dbReference type="HOGENOM" id="CLU_107727_0_0_1"/>
<dbReference type="InParanoid" id="P47055"/>
<dbReference type="OrthoDB" id="4056281at2759"/>
<dbReference type="BioCyc" id="YEAST:G3O-31504-MONOMER"/>
<dbReference type="BioGRID-ORCS" id="853413">
    <property type="hits" value="1 hit in 10 CRISPR screens"/>
</dbReference>
<dbReference type="PRO" id="PR:P47055"/>
<dbReference type="Proteomes" id="UP000002311">
    <property type="component" value="Chromosome X"/>
</dbReference>
<dbReference type="RNAct" id="P47055">
    <property type="molecule type" value="protein"/>
</dbReference>
<dbReference type="GO" id="GO:0005829">
    <property type="term" value="C:cytosol"/>
    <property type="evidence" value="ECO:0007005"/>
    <property type="project" value="SGD"/>
</dbReference>
<dbReference type="GO" id="GO:0016020">
    <property type="term" value="C:membrane"/>
    <property type="evidence" value="ECO:0007669"/>
    <property type="project" value="UniProtKB-SubCell"/>
</dbReference>
<dbReference type="GO" id="GO:0030476">
    <property type="term" value="P:ascospore wall assembly"/>
    <property type="evidence" value="ECO:0000316"/>
    <property type="project" value="SGD"/>
</dbReference>
<dbReference type="GO" id="GO:0051276">
    <property type="term" value="P:chromosome organization"/>
    <property type="evidence" value="ECO:0000315"/>
    <property type="project" value="SGD"/>
</dbReference>
<proteinExistence type="evidence at protein level"/>
<accession>P47055</accession>
<accession>D6VWE5</accession>
<name>LOH1_YEAST</name>
<gene>
    <name evidence="9" type="primary">LOH1</name>
    <name evidence="10" type="synonym">OSW4</name>
    <name evidence="13" type="ordered locus">YJL038C</name>
    <name type="ORF">J1232</name>
</gene>
<comment type="function">
    <text evidence="5 7">Involved in spore wall assembly (PubMed:23966878). May be involved in maintaining genome integrity (PubMed:18562670).</text>
</comment>
<comment type="subcellular location">
    <subcellularLocation>
        <location evidence="1">Membrane</location>
        <topology evidence="1">Multi-pass membrane protein</topology>
    </subcellularLocation>
</comment>
<comment type="induction">
    <text evidence="3 8">During sporulation. Repressed during vegetative growth by HST1 and RFM1.</text>
</comment>
<comment type="PTM">
    <text evidence="6">N-glycosylated.</text>
</comment>
<comment type="disruption phenotype">
    <text evidence="5 7">Displays elevated rates of loss of heterozygosity (LOH) (PubMed:18562670). A combined deletion of the LOH1/OSW4 and IRC18/OSW6 has reduced dityrosine incorporation in the outer spore wall (PubMed:23966878).</text>
</comment>
<comment type="similarity">
    <text evidence="11">Belongs to the OSW4/6 family.</text>
</comment>